<proteinExistence type="evidence at protein level"/>
<keyword id="KW-0067">ATP-binding</keyword>
<keyword id="KW-0238">DNA-binding</keyword>
<keyword id="KW-0479">Metal-binding</keyword>
<keyword id="KW-0547">Nucleotide-binding</keyword>
<keyword id="KW-1185">Reference proteome</keyword>
<keyword id="KW-0678">Repressor</keyword>
<keyword id="KW-0804">Transcription</keyword>
<keyword id="KW-0805">Transcription regulation</keyword>
<keyword id="KW-0862">Zinc</keyword>
<keyword id="KW-0863">Zinc-finger</keyword>
<dbReference type="EMBL" id="AE005672">
    <property type="protein sequence ID" value="AAK75791.1"/>
    <property type="molecule type" value="Genomic_DNA"/>
</dbReference>
<dbReference type="PIR" id="F95199">
    <property type="entry name" value="F95199"/>
</dbReference>
<dbReference type="RefSeq" id="WP_001203672.1">
    <property type="nucleotide sequence ID" value="NZ_CP155539.1"/>
</dbReference>
<dbReference type="SMR" id="P67318"/>
<dbReference type="IntAct" id="P67318">
    <property type="interactions" value="1"/>
</dbReference>
<dbReference type="PaxDb" id="170187-SP_1713"/>
<dbReference type="EnsemblBacteria" id="AAK75791">
    <property type="protein sequence ID" value="AAK75791"/>
    <property type="gene ID" value="SP_1713"/>
</dbReference>
<dbReference type="GeneID" id="93740109"/>
<dbReference type="KEGG" id="spn:SP_1713"/>
<dbReference type="eggNOG" id="COG1327">
    <property type="taxonomic scope" value="Bacteria"/>
</dbReference>
<dbReference type="PhylomeDB" id="P67318"/>
<dbReference type="BioCyc" id="SPNE170187:G1FZB-1736-MONOMER"/>
<dbReference type="Proteomes" id="UP000000585">
    <property type="component" value="Chromosome"/>
</dbReference>
<dbReference type="GO" id="GO:0005524">
    <property type="term" value="F:ATP binding"/>
    <property type="evidence" value="ECO:0007669"/>
    <property type="project" value="UniProtKB-KW"/>
</dbReference>
<dbReference type="GO" id="GO:0003677">
    <property type="term" value="F:DNA binding"/>
    <property type="evidence" value="ECO:0007669"/>
    <property type="project" value="UniProtKB-KW"/>
</dbReference>
<dbReference type="GO" id="GO:0008270">
    <property type="term" value="F:zinc ion binding"/>
    <property type="evidence" value="ECO:0007669"/>
    <property type="project" value="UniProtKB-UniRule"/>
</dbReference>
<dbReference type="GO" id="GO:0045892">
    <property type="term" value="P:negative regulation of DNA-templated transcription"/>
    <property type="evidence" value="ECO:0007669"/>
    <property type="project" value="UniProtKB-UniRule"/>
</dbReference>
<dbReference type="HAMAP" id="MF_00440">
    <property type="entry name" value="NrdR"/>
    <property type="match status" value="1"/>
</dbReference>
<dbReference type="InterPro" id="IPR005144">
    <property type="entry name" value="ATP-cone_dom"/>
</dbReference>
<dbReference type="InterPro" id="IPR055173">
    <property type="entry name" value="NrdR-like_N"/>
</dbReference>
<dbReference type="InterPro" id="IPR003796">
    <property type="entry name" value="RNR_NrdR-like"/>
</dbReference>
<dbReference type="NCBIfam" id="TIGR00244">
    <property type="entry name" value="transcriptional regulator NrdR"/>
    <property type="match status" value="1"/>
</dbReference>
<dbReference type="PANTHER" id="PTHR30455">
    <property type="entry name" value="TRANSCRIPTIONAL REPRESSOR NRDR"/>
    <property type="match status" value="1"/>
</dbReference>
<dbReference type="PANTHER" id="PTHR30455:SF2">
    <property type="entry name" value="TRANSCRIPTIONAL REPRESSOR NRDR"/>
    <property type="match status" value="1"/>
</dbReference>
<dbReference type="Pfam" id="PF03477">
    <property type="entry name" value="ATP-cone"/>
    <property type="match status" value="1"/>
</dbReference>
<dbReference type="Pfam" id="PF22811">
    <property type="entry name" value="Zn_ribbon_NrdR"/>
    <property type="match status" value="1"/>
</dbReference>
<dbReference type="PROSITE" id="PS51161">
    <property type="entry name" value="ATP_CONE"/>
    <property type="match status" value="1"/>
</dbReference>
<feature type="chain" id="PRO_0000182357" description="Transcriptional repressor NrdR">
    <location>
        <begin position="1"/>
        <end position="157"/>
    </location>
</feature>
<feature type="domain" description="ATP-cone" evidence="1">
    <location>
        <begin position="49"/>
        <end position="139"/>
    </location>
</feature>
<feature type="zinc finger region" evidence="1">
    <location>
        <begin position="3"/>
        <end position="34"/>
    </location>
</feature>
<feature type="region of interest" description="Disordered" evidence="2">
    <location>
        <begin position="1"/>
        <end position="22"/>
    </location>
</feature>
<evidence type="ECO:0000255" key="1">
    <source>
        <dbReference type="HAMAP-Rule" id="MF_00440"/>
    </source>
</evidence>
<evidence type="ECO:0000256" key="2">
    <source>
        <dbReference type="SAM" id="MobiDB-lite"/>
    </source>
</evidence>
<protein>
    <recommendedName>
        <fullName evidence="1">Transcriptional repressor NrdR</fullName>
    </recommendedName>
</protein>
<reference key="1">
    <citation type="journal article" date="2001" name="Science">
        <title>Complete genome sequence of a virulent isolate of Streptococcus pneumoniae.</title>
        <authorList>
            <person name="Tettelin H."/>
            <person name="Nelson K.E."/>
            <person name="Paulsen I.T."/>
            <person name="Eisen J.A."/>
            <person name="Read T.D."/>
            <person name="Peterson S.N."/>
            <person name="Heidelberg J.F."/>
            <person name="DeBoy R.T."/>
            <person name="Haft D.H."/>
            <person name="Dodson R.J."/>
            <person name="Durkin A.S."/>
            <person name="Gwinn M.L."/>
            <person name="Kolonay J.F."/>
            <person name="Nelson W.C."/>
            <person name="Peterson J.D."/>
            <person name="Umayam L.A."/>
            <person name="White O."/>
            <person name="Salzberg S.L."/>
            <person name="Lewis M.R."/>
            <person name="Radune D."/>
            <person name="Holtzapple E.K."/>
            <person name="Khouri H.M."/>
            <person name="Wolf A.M."/>
            <person name="Utterback T.R."/>
            <person name="Hansen C.L."/>
            <person name="McDonald L.A."/>
            <person name="Feldblyum T.V."/>
            <person name="Angiuoli S.V."/>
            <person name="Dickinson T."/>
            <person name="Hickey E.K."/>
            <person name="Holt I.E."/>
            <person name="Loftus B.J."/>
            <person name="Yang F."/>
            <person name="Smith H.O."/>
            <person name="Venter J.C."/>
            <person name="Dougherty B.A."/>
            <person name="Morrison D.A."/>
            <person name="Hollingshead S.K."/>
            <person name="Fraser C.M."/>
        </authorList>
    </citation>
    <scope>NUCLEOTIDE SEQUENCE [LARGE SCALE GENOMIC DNA]</scope>
    <source>
        <strain>ATCC BAA-334 / TIGR4</strain>
    </source>
</reference>
<gene>
    <name evidence="1" type="primary">nrdR</name>
    <name type="ordered locus">SP_1713</name>
</gene>
<sequence>MRCPKCGATKSSVIDSRQAEEGNTIRRRRECDECQHRFTTYERVEERTLVVVKKDGTREQFSRDKIFNGIIRSAQKRPVSSDEINMVVNRIEQKLRGRNENEIQSEDIGSLVMEELAELDEITYVRFASVYRSFKDVSELESLLQQITQSSKKKKER</sequence>
<organism>
    <name type="scientific">Streptococcus pneumoniae serotype 4 (strain ATCC BAA-334 / TIGR4)</name>
    <dbReference type="NCBI Taxonomy" id="170187"/>
    <lineage>
        <taxon>Bacteria</taxon>
        <taxon>Bacillati</taxon>
        <taxon>Bacillota</taxon>
        <taxon>Bacilli</taxon>
        <taxon>Lactobacillales</taxon>
        <taxon>Streptococcaceae</taxon>
        <taxon>Streptococcus</taxon>
    </lineage>
</organism>
<name>NRDR_STRPN</name>
<comment type="function">
    <text evidence="1">Negatively regulates transcription of bacterial ribonucleotide reductase nrd genes and operons by binding to NrdR-boxes.</text>
</comment>
<comment type="cofactor">
    <cofactor evidence="1">
        <name>Zn(2+)</name>
        <dbReference type="ChEBI" id="CHEBI:29105"/>
    </cofactor>
    <text evidence="1">Binds 1 zinc ion.</text>
</comment>
<comment type="interaction">
    <interactant intactId="EBI-11615955">
        <id>P67318</id>
    </interactant>
    <interactant intactId="EBI-3990391">
        <id>Q37990</id>
        <label>orf6</label>
    </interactant>
    <organismsDiffer>true</organismsDiffer>
    <experiments>2</experiments>
</comment>
<comment type="similarity">
    <text evidence="1">Belongs to the NrdR family.</text>
</comment>
<accession>P67318</accession>
<accession>P58260</accession>